<feature type="signal peptide" evidence="1">
    <location>
        <begin position="1"/>
        <end position="25"/>
    </location>
</feature>
<feature type="chain" id="PRO_0000018371" description="Non-specific lipid-transfer protein A">
    <location>
        <begin position="26"/>
        <end position="118"/>
    </location>
</feature>
<feature type="disulfide bond" evidence="1">
    <location>
        <begin position="29"/>
        <end position="76"/>
    </location>
</feature>
<feature type="disulfide bond" evidence="1">
    <location>
        <begin position="39"/>
        <end position="53"/>
    </location>
</feature>
<feature type="disulfide bond" evidence="1">
    <location>
        <begin position="54"/>
        <end position="100"/>
    </location>
</feature>
<feature type="disulfide bond" evidence="1">
    <location>
        <begin position="74"/>
        <end position="114"/>
    </location>
</feature>
<reference key="1">
    <citation type="journal article" date="1995" name="Plant J.">
        <title>The gene for the major cuticular wax-associated protein and three homologous genes from broccoli (Brassica oleracea) and their expression patterns.</title>
        <authorList>
            <person name="Pyee J."/>
            <person name="Kolattukudy P.E."/>
        </authorList>
    </citation>
    <scope>NUCLEOTIDE SEQUENCE [GENOMIC DNA]</scope>
    <source>
        <tissue>Leaf</tissue>
    </source>
</reference>
<keyword id="KW-1015">Disulfide bond</keyword>
<keyword id="KW-0446">Lipid-binding</keyword>
<keyword id="KW-0732">Signal</keyword>
<keyword id="KW-0813">Transport</keyword>
<gene>
    <name type="primary">WAX9A</name>
</gene>
<sequence length="118" mass="11911">MAGVMKLACLVLACMIVAGPITANRALTCGTVNSNVAPCIGYITQGGTLPGACCTGVSKLNSMARTTPDRQQACRCLETAARALGPNLNAGRAAGIPKACGVSVPFPISTNTNCNNVK</sequence>
<comment type="function">
    <text>Plant non-specific lipid-transfer proteins transfer phospholipids as well as galactolipids across membranes. May play a role in wax or cutin deposition in the cell walls of expanding epidermal cells and certain secretory tissues.</text>
</comment>
<comment type="similarity">
    <text evidence="2">Belongs to the plant LTP family.</text>
</comment>
<organism>
    <name type="scientific">Brassica oleracea var. italica</name>
    <name type="common">Broccoli</name>
    <dbReference type="NCBI Taxonomy" id="36774"/>
    <lineage>
        <taxon>Eukaryota</taxon>
        <taxon>Viridiplantae</taxon>
        <taxon>Streptophyta</taxon>
        <taxon>Embryophyta</taxon>
        <taxon>Tracheophyta</taxon>
        <taxon>Spermatophyta</taxon>
        <taxon>Magnoliopsida</taxon>
        <taxon>eudicotyledons</taxon>
        <taxon>Gunneridae</taxon>
        <taxon>Pentapetalae</taxon>
        <taxon>rosids</taxon>
        <taxon>malvids</taxon>
        <taxon>Brassicales</taxon>
        <taxon>Brassicaceae</taxon>
        <taxon>Brassiceae</taxon>
        <taxon>Brassica</taxon>
    </lineage>
</organism>
<protein>
    <recommendedName>
        <fullName>Non-specific lipid-transfer protein A</fullName>
        <shortName>LTP A</shortName>
    </recommendedName>
    <alternativeName>
        <fullName>Wax-associated protein 9A</fullName>
    </alternativeName>
</protein>
<dbReference type="EMBL" id="L33904">
    <property type="protein sequence ID" value="AAA73945.1"/>
    <property type="molecule type" value="Genomic_DNA"/>
</dbReference>
<dbReference type="PIR" id="T14464">
    <property type="entry name" value="T14464"/>
</dbReference>
<dbReference type="SMR" id="Q42641"/>
<dbReference type="GO" id="GO:0008289">
    <property type="term" value="F:lipid binding"/>
    <property type="evidence" value="ECO:0007669"/>
    <property type="project" value="UniProtKB-KW"/>
</dbReference>
<dbReference type="GO" id="GO:0006869">
    <property type="term" value="P:lipid transport"/>
    <property type="evidence" value="ECO:0007669"/>
    <property type="project" value="InterPro"/>
</dbReference>
<dbReference type="CDD" id="cd01960">
    <property type="entry name" value="nsLTP1"/>
    <property type="match status" value="1"/>
</dbReference>
<dbReference type="FunFam" id="1.10.110.10:FF:000002">
    <property type="entry name" value="Non-specific lipid-transfer protein"/>
    <property type="match status" value="1"/>
</dbReference>
<dbReference type="Gene3D" id="1.10.110.10">
    <property type="entry name" value="Plant lipid-transfer and hydrophobic proteins"/>
    <property type="match status" value="1"/>
</dbReference>
<dbReference type="InterPro" id="IPR036312">
    <property type="entry name" value="Bifun_inhib/LTP/seed_sf"/>
</dbReference>
<dbReference type="InterPro" id="IPR016140">
    <property type="entry name" value="Bifunc_inhib/LTP/seed_store"/>
</dbReference>
<dbReference type="InterPro" id="IPR000528">
    <property type="entry name" value="Plant_nsLTP"/>
</dbReference>
<dbReference type="PANTHER" id="PTHR33076">
    <property type="entry name" value="NON-SPECIFIC LIPID-TRANSFER PROTEIN 2-RELATED"/>
    <property type="match status" value="1"/>
</dbReference>
<dbReference type="Pfam" id="PF00234">
    <property type="entry name" value="Tryp_alpha_amyl"/>
    <property type="match status" value="1"/>
</dbReference>
<dbReference type="PRINTS" id="PR00382">
    <property type="entry name" value="LIPIDTRNSFER"/>
</dbReference>
<dbReference type="SMART" id="SM00499">
    <property type="entry name" value="AAI"/>
    <property type="match status" value="1"/>
</dbReference>
<dbReference type="SUPFAM" id="SSF47699">
    <property type="entry name" value="Bifunctional inhibitor/lipid-transfer protein/seed storage 2S albumin"/>
    <property type="match status" value="1"/>
</dbReference>
<dbReference type="PROSITE" id="PS00597">
    <property type="entry name" value="PLANT_LTP"/>
    <property type="match status" value="1"/>
</dbReference>
<name>NLTPA_BRAOT</name>
<proteinExistence type="inferred from homology"/>
<accession>Q42641</accession>
<evidence type="ECO:0000255" key="1"/>
<evidence type="ECO:0000305" key="2"/>